<reference key="1">
    <citation type="submission" date="2005-08" db="EMBL/GenBank/DDBJ databases">
        <authorList>
            <consortium name="NIH - Mammalian Gene Collection (MGC) project"/>
        </authorList>
    </citation>
    <scope>NUCLEOTIDE SEQUENCE [LARGE SCALE MRNA]</scope>
    <source>
        <strain>Hereford</strain>
        <tissue>Testis</tissue>
    </source>
</reference>
<accession>Q3SZV8</accession>
<comment type="function">
    <text evidence="1">Has antibacterial activity against a variety of bacteria including S.aureus, P.aeruginosa and M.tuberculosis. Acts by inducing bacterial membrane breakage (By similarity).</text>
</comment>
<comment type="function">
    <text evidence="1">Induces production of reactive oxygen species (ROS) which are necessary for cell proliferation. May play a role in inducing oxidative DNA damage and replicative senescence. May play a role in the coordination of mitochondrial morphology and cell proliferation (By similarity).</text>
</comment>
<comment type="subcellular location">
    <subcellularLocation>
        <location evidence="1">Mitochondrion inner membrane</location>
        <topology evidence="1">Single-pass membrane protein</topology>
    </subcellularLocation>
</comment>
<comment type="similarity">
    <text evidence="3">Belongs to the MGR2 family.</text>
</comment>
<evidence type="ECO:0000250" key="1"/>
<evidence type="ECO:0000255" key="2"/>
<evidence type="ECO:0000305" key="3"/>
<keyword id="KW-0044">Antibiotic</keyword>
<keyword id="KW-0929">Antimicrobial</keyword>
<keyword id="KW-0472">Membrane</keyword>
<keyword id="KW-0496">Mitochondrion</keyword>
<keyword id="KW-0999">Mitochondrion inner membrane</keyword>
<keyword id="KW-1185">Reference proteome</keyword>
<keyword id="KW-0812">Transmembrane</keyword>
<keyword id="KW-1133">Transmembrane helix</keyword>
<organism>
    <name type="scientific">Bos taurus</name>
    <name type="common">Bovine</name>
    <dbReference type="NCBI Taxonomy" id="9913"/>
    <lineage>
        <taxon>Eukaryota</taxon>
        <taxon>Metazoa</taxon>
        <taxon>Chordata</taxon>
        <taxon>Craniata</taxon>
        <taxon>Vertebrata</taxon>
        <taxon>Euteleostomi</taxon>
        <taxon>Mammalia</taxon>
        <taxon>Eutheria</taxon>
        <taxon>Laurasiatheria</taxon>
        <taxon>Artiodactyla</taxon>
        <taxon>Ruminantia</taxon>
        <taxon>Pecora</taxon>
        <taxon>Bovidae</taxon>
        <taxon>Bovinae</taxon>
        <taxon>Bos</taxon>
    </lineage>
</organism>
<gene>
    <name type="primary">ROMO1</name>
</gene>
<feature type="chain" id="PRO_0000294146" description="Reactive oxygen species modulator 1">
    <location>
        <begin position="1"/>
        <end position="79"/>
    </location>
</feature>
<feature type="transmembrane region" description="Helical" evidence="2">
    <location>
        <begin position="22"/>
        <end position="44"/>
    </location>
</feature>
<feature type="region of interest" description="Sufficient for antibacterial activity" evidence="1">
    <location>
        <begin position="42"/>
        <end position="60"/>
    </location>
</feature>
<protein>
    <recommendedName>
        <fullName>Reactive oxygen species modulator 1</fullName>
        <shortName>ROS modulator 1</shortName>
    </recommendedName>
    <alternativeName>
        <fullName>Protein MGR2 homolog</fullName>
    </alternativeName>
</protein>
<dbReference type="EMBL" id="BC102685">
    <property type="protein sequence ID" value="AAI02686.1"/>
    <property type="molecule type" value="mRNA"/>
</dbReference>
<dbReference type="RefSeq" id="NP_001108000.1">
    <property type="nucleotide sequence ID" value="NM_001114528.2"/>
</dbReference>
<dbReference type="RefSeq" id="XP_005214932.1">
    <property type="nucleotide sequence ID" value="XM_005214875.5"/>
</dbReference>
<dbReference type="SMR" id="Q3SZV8"/>
<dbReference type="FunCoup" id="Q3SZV8">
    <property type="interactions" value="1463"/>
</dbReference>
<dbReference type="STRING" id="9913.ENSBTAP00000039044"/>
<dbReference type="PaxDb" id="9913-ENSBTAP00000039044"/>
<dbReference type="Ensembl" id="ENSBTAT00000039245.4">
    <property type="protein sequence ID" value="ENSBTAP00000039044.2"/>
    <property type="gene ID" value="ENSBTAG00000027361.4"/>
</dbReference>
<dbReference type="GeneID" id="618530"/>
<dbReference type="KEGG" id="bta:618530"/>
<dbReference type="CTD" id="140823"/>
<dbReference type="VEuPathDB" id="HostDB:ENSBTAG00000027361"/>
<dbReference type="VGNC" id="VGNC:34085">
    <property type="gene designation" value="ROMO1"/>
</dbReference>
<dbReference type="eggNOG" id="KOG4096">
    <property type="taxonomic scope" value="Eukaryota"/>
</dbReference>
<dbReference type="GeneTree" id="ENSGT00390000005315"/>
<dbReference type="HOGENOM" id="CLU_142435_2_0_1"/>
<dbReference type="InParanoid" id="Q3SZV8"/>
<dbReference type="OMA" id="SCWDRVK"/>
<dbReference type="OrthoDB" id="5409308at2759"/>
<dbReference type="TreeFam" id="TF300273"/>
<dbReference type="Proteomes" id="UP000009136">
    <property type="component" value="Chromosome 13"/>
</dbReference>
<dbReference type="Bgee" id="ENSBTAG00000027361">
    <property type="expression patterns" value="Expressed in oocyte and 105 other cell types or tissues"/>
</dbReference>
<dbReference type="GO" id="GO:0005739">
    <property type="term" value="C:mitochondrion"/>
    <property type="evidence" value="ECO:0000250"/>
    <property type="project" value="UniProtKB"/>
</dbReference>
<dbReference type="GO" id="GO:0005744">
    <property type="term" value="C:TIM23 mitochondrial import inner membrane translocase complex"/>
    <property type="evidence" value="ECO:0000318"/>
    <property type="project" value="GO_Central"/>
</dbReference>
<dbReference type="GO" id="GO:0008324">
    <property type="term" value="F:monoatomic cation transmembrane transporter activity"/>
    <property type="evidence" value="ECO:0007669"/>
    <property type="project" value="Ensembl"/>
</dbReference>
<dbReference type="GO" id="GO:0061844">
    <property type="term" value="P:antimicrobial humoral immune response mediated by antimicrobial peptide"/>
    <property type="evidence" value="ECO:0007669"/>
    <property type="project" value="Ensembl"/>
</dbReference>
<dbReference type="GO" id="GO:0034614">
    <property type="term" value="P:cellular response to reactive oxygen species"/>
    <property type="evidence" value="ECO:0000250"/>
    <property type="project" value="UniProtKB"/>
</dbReference>
<dbReference type="GO" id="GO:0051838">
    <property type="term" value="P:cytolysis by host of symbiont cells"/>
    <property type="evidence" value="ECO:0007669"/>
    <property type="project" value="Ensembl"/>
</dbReference>
<dbReference type="GO" id="GO:0050829">
    <property type="term" value="P:defense response to Gram-negative bacterium"/>
    <property type="evidence" value="ECO:0007669"/>
    <property type="project" value="Ensembl"/>
</dbReference>
<dbReference type="GO" id="GO:0050830">
    <property type="term" value="P:defense response to Gram-positive bacterium"/>
    <property type="evidence" value="ECO:0007669"/>
    <property type="project" value="Ensembl"/>
</dbReference>
<dbReference type="GO" id="GO:2000379">
    <property type="term" value="P:positive regulation of reactive oxygen species metabolic process"/>
    <property type="evidence" value="ECO:0000250"/>
    <property type="project" value="UniProtKB"/>
</dbReference>
<dbReference type="GO" id="GO:0030150">
    <property type="term" value="P:protein import into mitochondrial matrix"/>
    <property type="evidence" value="ECO:0000318"/>
    <property type="project" value="GO_Central"/>
</dbReference>
<dbReference type="GO" id="GO:0045039">
    <property type="term" value="P:protein insertion into mitochondrial inner membrane"/>
    <property type="evidence" value="ECO:0000318"/>
    <property type="project" value="GO_Central"/>
</dbReference>
<dbReference type="GO" id="GO:0090399">
    <property type="term" value="P:replicative senescence"/>
    <property type="evidence" value="ECO:0000250"/>
    <property type="project" value="UniProtKB"/>
</dbReference>
<dbReference type="InterPro" id="IPR018450">
    <property type="entry name" value="Romo1/Mgr2"/>
</dbReference>
<dbReference type="PANTHER" id="PTHR28525">
    <property type="entry name" value="REACTIVE OXYGEN SPECIES MODULATOR 1"/>
    <property type="match status" value="1"/>
</dbReference>
<dbReference type="PANTHER" id="PTHR28525:SF1">
    <property type="entry name" value="REACTIVE OXYGEN SPECIES MODULATOR 1"/>
    <property type="match status" value="1"/>
</dbReference>
<dbReference type="Pfam" id="PF10247">
    <property type="entry name" value="Romo1"/>
    <property type="match status" value="1"/>
</dbReference>
<dbReference type="SMART" id="SM01378">
    <property type="entry name" value="Romo1"/>
    <property type="match status" value="1"/>
</dbReference>
<sequence length="79" mass="8183">MPVAVGPYGQSQPSCFDRVKMGFVMGCAVGMAAGALFGTFSCLRIGMRGRELMGGIGKTMMQSGGTFGTFMAIGMGIRC</sequence>
<proteinExistence type="inferred from homology"/>
<name>ROMO1_BOVIN</name>